<accession>Q2YCH6</accession>
<gene>
    <name evidence="1" type="primary">folE2</name>
    <name type="ordered locus">Nmul_A0237</name>
</gene>
<keyword id="KW-0378">Hydrolase</keyword>
<keyword id="KW-1185">Reference proteome</keyword>
<organism>
    <name type="scientific">Nitrosospira multiformis (strain ATCC 25196 / NCIMB 11849 / C 71)</name>
    <dbReference type="NCBI Taxonomy" id="323848"/>
    <lineage>
        <taxon>Bacteria</taxon>
        <taxon>Pseudomonadati</taxon>
        <taxon>Pseudomonadota</taxon>
        <taxon>Betaproteobacteria</taxon>
        <taxon>Nitrosomonadales</taxon>
        <taxon>Nitrosomonadaceae</taxon>
        <taxon>Nitrosospira</taxon>
    </lineage>
</organism>
<protein>
    <recommendedName>
        <fullName evidence="1">GTP cyclohydrolase FolE2</fullName>
        <ecNumber evidence="1">3.5.4.16</ecNumber>
    </recommendedName>
</protein>
<proteinExistence type="inferred from homology"/>
<sequence>MNKMLIADVQSVADTRRIAIDKAGIRAIRHPVRIMDKAGVQHTVAVFNMYVNLAHHLKGVHMSRFVEMLNEHDSVISVETFEKLLISMVKKLEAESGDIEMRFPYFIGKTAPVSGIKSLMDYDVTFIGQTRNGESRFTLKVVVPVTSLCPCSKEVSDDGAHNQRSHISISIRANHFVWIEDLIRIAEDQASCELYGLLKRSDEKYVTEKAYGNPKFVEDAVRDIASVLDRDERIDAYTVEAENFESIHNHSAYALIECDKLKN</sequence>
<dbReference type="EC" id="3.5.4.16" evidence="1"/>
<dbReference type="EMBL" id="CP000103">
    <property type="protein sequence ID" value="ABB73545.1"/>
    <property type="molecule type" value="Genomic_DNA"/>
</dbReference>
<dbReference type="RefSeq" id="WP_011379599.1">
    <property type="nucleotide sequence ID" value="NC_007614.1"/>
</dbReference>
<dbReference type="SMR" id="Q2YCH6"/>
<dbReference type="STRING" id="323848.Nmul_A0237"/>
<dbReference type="KEGG" id="nmu:Nmul_A0237"/>
<dbReference type="eggNOG" id="COG1469">
    <property type="taxonomic scope" value="Bacteria"/>
</dbReference>
<dbReference type="HOGENOM" id="CLU_062816_1_1_4"/>
<dbReference type="OrthoDB" id="9774824at2"/>
<dbReference type="UniPathway" id="UPA00848">
    <property type="reaction ID" value="UER00151"/>
</dbReference>
<dbReference type="Proteomes" id="UP000002718">
    <property type="component" value="Chromosome"/>
</dbReference>
<dbReference type="GO" id="GO:0003934">
    <property type="term" value="F:GTP cyclohydrolase I activity"/>
    <property type="evidence" value="ECO:0007669"/>
    <property type="project" value="UniProtKB-UniRule"/>
</dbReference>
<dbReference type="GO" id="GO:0046654">
    <property type="term" value="P:tetrahydrofolate biosynthetic process"/>
    <property type="evidence" value="ECO:0007669"/>
    <property type="project" value="UniProtKB-UniRule"/>
</dbReference>
<dbReference type="Gene3D" id="3.10.270.10">
    <property type="entry name" value="Urate Oxidase"/>
    <property type="match status" value="1"/>
</dbReference>
<dbReference type="HAMAP" id="MF_01527_B">
    <property type="entry name" value="GTP_cyclohydrol_B"/>
    <property type="match status" value="1"/>
</dbReference>
<dbReference type="InterPro" id="IPR022838">
    <property type="entry name" value="GTP_cyclohydrolase_FolE2"/>
</dbReference>
<dbReference type="InterPro" id="IPR003801">
    <property type="entry name" value="GTP_cyclohydrolase_FolE2/MptA"/>
</dbReference>
<dbReference type="NCBIfam" id="NF010200">
    <property type="entry name" value="PRK13674.1-1"/>
    <property type="match status" value="1"/>
</dbReference>
<dbReference type="PANTHER" id="PTHR36445">
    <property type="entry name" value="GTP CYCLOHYDROLASE MPTA"/>
    <property type="match status" value="1"/>
</dbReference>
<dbReference type="PANTHER" id="PTHR36445:SF1">
    <property type="entry name" value="GTP CYCLOHYDROLASE MPTA"/>
    <property type="match status" value="1"/>
</dbReference>
<dbReference type="Pfam" id="PF02649">
    <property type="entry name" value="GCHY-1"/>
    <property type="match status" value="1"/>
</dbReference>
<feature type="chain" id="PRO_0000289502" description="GTP cyclohydrolase FolE2">
    <location>
        <begin position="1"/>
        <end position="263"/>
    </location>
</feature>
<feature type="site" description="May be catalytically important" evidence="1">
    <location>
        <position position="149"/>
    </location>
</feature>
<reference key="1">
    <citation type="submission" date="2005-08" db="EMBL/GenBank/DDBJ databases">
        <title>Complete sequence of chromosome 1 of Nitrosospira multiformis ATCC 25196.</title>
        <authorList>
            <person name="Copeland A."/>
            <person name="Lucas S."/>
            <person name="Lapidus A."/>
            <person name="Barry K."/>
            <person name="Detter J.C."/>
            <person name="Glavina T."/>
            <person name="Hammon N."/>
            <person name="Israni S."/>
            <person name="Pitluck S."/>
            <person name="Chain P."/>
            <person name="Malfatti S."/>
            <person name="Shin M."/>
            <person name="Vergez L."/>
            <person name="Schmutz J."/>
            <person name="Larimer F."/>
            <person name="Land M."/>
            <person name="Hauser L."/>
            <person name="Kyrpides N."/>
            <person name="Lykidis A."/>
            <person name="Richardson P."/>
        </authorList>
    </citation>
    <scope>NUCLEOTIDE SEQUENCE [LARGE SCALE GENOMIC DNA]</scope>
    <source>
        <strain>ATCC 25196 / NCIMB 11849 / C 71</strain>
    </source>
</reference>
<name>GCH4_NITMU</name>
<comment type="function">
    <text evidence="1">Converts GTP to 7,8-dihydroneopterin triphosphate.</text>
</comment>
<comment type="catalytic activity">
    <reaction evidence="1">
        <text>GTP + H2O = 7,8-dihydroneopterin 3'-triphosphate + formate + H(+)</text>
        <dbReference type="Rhea" id="RHEA:17473"/>
        <dbReference type="ChEBI" id="CHEBI:15377"/>
        <dbReference type="ChEBI" id="CHEBI:15378"/>
        <dbReference type="ChEBI" id="CHEBI:15740"/>
        <dbReference type="ChEBI" id="CHEBI:37565"/>
        <dbReference type="ChEBI" id="CHEBI:58462"/>
        <dbReference type="EC" id="3.5.4.16"/>
    </reaction>
</comment>
<comment type="pathway">
    <text evidence="1">Cofactor biosynthesis; 7,8-dihydroneopterin triphosphate biosynthesis; 7,8-dihydroneopterin triphosphate from GTP: step 1/1.</text>
</comment>
<comment type="similarity">
    <text evidence="1">Belongs to the GTP cyclohydrolase IV family.</text>
</comment>
<evidence type="ECO:0000255" key="1">
    <source>
        <dbReference type="HAMAP-Rule" id="MF_01527"/>
    </source>
</evidence>